<organism>
    <name type="scientific">Homo sapiens</name>
    <name type="common">Human</name>
    <dbReference type="NCBI Taxonomy" id="9606"/>
    <lineage>
        <taxon>Eukaryota</taxon>
        <taxon>Metazoa</taxon>
        <taxon>Chordata</taxon>
        <taxon>Craniata</taxon>
        <taxon>Vertebrata</taxon>
        <taxon>Euteleostomi</taxon>
        <taxon>Mammalia</taxon>
        <taxon>Eutheria</taxon>
        <taxon>Euarchontoglires</taxon>
        <taxon>Primates</taxon>
        <taxon>Haplorrhini</taxon>
        <taxon>Catarrhini</taxon>
        <taxon>Hominidae</taxon>
        <taxon>Homo</taxon>
    </lineage>
</organism>
<reference key="1">
    <citation type="journal article" date="2004" name="Nat. Genet.">
        <title>Complete sequencing and characterization of 21,243 full-length human cDNAs.</title>
        <authorList>
            <person name="Ota T."/>
            <person name="Suzuki Y."/>
            <person name="Nishikawa T."/>
            <person name="Otsuki T."/>
            <person name="Sugiyama T."/>
            <person name="Irie R."/>
            <person name="Wakamatsu A."/>
            <person name="Hayashi K."/>
            <person name="Sato H."/>
            <person name="Nagai K."/>
            <person name="Kimura K."/>
            <person name="Makita H."/>
            <person name="Sekine M."/>
            <person name="Obayashi M."/>
            <person name="Nishi T."/>
            <person name="Shibahara T."/>
            <person name="Tanaka T."/>
            <person name="Ishii S."/>
            <person name="Yamamoto J."/>
            <person name="Saito K."/>
            <person name="Kawai Y."/>
            <person name="Isono Y."/>
            <person name="Nakamura Y."/>
            <person name="Nagahari K."/>
            <person name="Murakami K."/>
            <person name="Yasuda T."/>
            <person name="Iwayanagi T."/>
            <person name="Wagatsuma M."/>
            <person name="Shiratori A."/>
            <person name="Sudo H."/>
            <person name="Hosoiri T."/>
            <person name="Kaku Y."/>
            <person name="Kodaira H."/>
            <person name="Kondo H."/>
            <person name="Sugawara M."/>
            <person name="Takahashi M."/>
            <person name="Kanda K."/>
            <person name="Yokoi T."/>
            <person name="Furuya T."/>
            <person name="Kikkawa E."/>
            <person name="Omura Y."/>
            <person name="Abe K."/>
            <person name="Kamihara K."/>
            <person name="Katsuta N."/>
            <person name="Sato K."/>
            <person name="Tanikawa M."/>
            <person name="Yamazaki M."/>
            <person name="Ninomiya K."/>
            <person name="Ishibashi T."/>
            <person name="Yamashita H."/>
            <person name="Murakawa K."/>
            <person name="Fujimori K."/>
            <person name="Tanai H."/>
            <person name="Kimata M."/>
            <person name="Watanabe M."/>
            <person name="Hiraoka S."/>
            <person name="Chiba Y."/>
            <person name="Ishida S."/>
            <person name="Ono Y."/>
            <person name="Takiguchi S."/>
            <person name="Watanabe S."/>
            <person name="Yosida M."/>
            <person name="Hotuta T."/>
            <person name="Kusano J."/>
            <person name="Kanehori K."/>
            <person name="Takahashi-Fujii A."/>
            <person name="Hara H."/>
            <person name="Tanase T.-O."/>
            <person name="Nomura Y."/>
            <person name="Togiya S."/>
            <person name="Komai F."/>
            <person name="Hara R."/>
            <person name="Takeuchi K."/>
            <person name="Arita M."/>
            <person name="Imose N."/>
            <person name="Musashino K."/>
            <person name="Yuuki H."/>
            <person name="Oshima A."/>
            <person name="Sasaki N."/>
            <person name="Aotsuka S."/>
            <person name="Yoshikawa Y."/>
            <person name="Matsunawa H."/>
            <person name="Ichihara T."/>
            <person name="Shiohata N."/>
            <person name="Sano S."/>
            <person name="Moriya S."/>
            <person name="Momiyama H."/>
            <person name="Satoh N."/>
            <person name="Takami S."/>
            <person name="Terashima Y."/>
            <person name="Suzuki O."/>
            <person name="Nakagawa S."/>
            <person name="Senoh A."/>
            <person name="Mizoguchi H."/>
            <person name="Goto Y."/>
            <person name="Shimizu F."/>
            <person name="Wakebe H."/>
            <person name="Hishigaki H."/>
            <person name="Watanabe T."/>
            <person name="Sugiyama A."/>
            <person name="Takemoto M."/>
            <person name="Kawakami B."/>
            <person name="Yamazaki M."/>
            <person name="Watanabe K."/>
            <person name="Kumagai A."/>
            <person name="Itakura S."/>
            <person name="Fukuzumi Y."/>
            <person name="Fujimori Y."/>
            <person name="Komiyama M."/>
            <person name="Tashiro H."/>
            <person name="Tanigami A."/>
            <person name="Fujiwara T."/>
            <person name="Ono T."/>
            <person name="Yamada K."/>
            <person name="Fujii Y."/>
            <person name="Ozaki K."/>
            <person name="Hirao M."/>
            <person name="Ohmori Y."/>
            <person name="Kawabata A."/>
            <person name="Hikiji T."/>
            <person name="Kobatake N."/>
            <person name="Inagaki H."/>
            <person name="Ikema Y."/>
            <person name="Okamoto S."/>
            <person name="Okitani R."/>
            <person name="Kawakami T."/>
            <person name="Noguchi S."/>
            <person name="Itoh T."/>
            <person name="Shigeta K."/>
            <person name="Senba T."/>
            <person name="Matsumura K."/>
            <person name="Nakajima Y."/>
            <person name="Mizuno T."/>
            <person name="Morinaga M."/>
            <person name="Sasaki M."/>
            <person name="Togashi T."/>
            <person name="Oyama M."/>
            <person name="Hata H."/>
            <person name="Watanabe M."/>
            <person name="Komatsu T."/>
            <person name="Mizushima-Sugano J."/>
            <person name="Satoh T."/>
            <person name="Shirai Y."/>
            <person name="Takahashi Y."/>
            <person name="Nakagawa K."/>
            <person name="Okumura K."/>
            <person name="Nagase T."/>
            <person name="Nomura N."/>
            <person name="Kikuchi H."/>
            <person name="Masuho Y."/>
            <person name="Yamashita R."/>
            <person name="Nakai K."/>
            <person name="Yada T."/>
            <person name="Nakamura Y."/>
            <person name="Ohara O."/>
            <person name="Isogai T."/>
            <person name="Sugano S."/>
        </authorList>
    </citation>
    <scope>NUCLEOTIDE SEQUENCE [LARGE SCALE MRNA] (ISOFORMS 1 AND 2)</scope>
    <source>
        <tissue>Testis</tissue>
    </source>
</reference>
<reference key="2">
    <citation type="journal article" date="2006" name="Nature">
        <title>The finished DNA sequence of human chromosome 12.</title>
        <authorList>
            <person name="Scherer S.E."/>
            <person name="Muzny D.M."/>
            <person name="Buhay C.J."/>
            <person name="Chen R."/>
            <person name="Cree A."/>
            <person name="Ding Y."/>
            <person name="Dugan-Rocha S."/>
            <person name="Gill R."/>
            <person name="Gunaratne P."/>
            <person name="Harris R.A."/>
            <person name="Hawes A.C."/>
            <person name="Hernandez J."/>
            <person name="Hodgson A.V."/>
            <person name="Hume J."/>
            <person name="Jackson A."/>
            <person name="Khan Z.M."/>
            <person name="Kovar-Smith C."/>
            <person name="Lewis L.R."/>
            <person name="Lozado R.J."/>
            <person name="Metzker M.L."/>
            <person name="Milosavljevic A."/>
            <person name="Miner G.R."/>
            <person name="Montgomery K.T."/>
            <person name="Morgan M.B."/>
            <person name="Nazareth L.V."/>
            <person name="Scott G."/>
            <person name="Sodergren E."/>
            <person name="Song X.-Z."/>
            <person name="Steffen D."/>
            <person name="Lovering R.C."/>
            <person name="Wheeler D.A."/>
            <person name="Worley K.C."/>
            <person name="Yuan Y."/>
            <person name="Zhang Z."/>
            <person name="Adams C.Q."/>
            <person name="Ansari-Lari M.A."/>
            <person name="Ayele M."/>
            <person name="Brown M.J."/>
            <person name="Chen G."/>
            <person name="Chen Z."/>
            <person name="Clerc-Blankenburg K.P."/>
            <person name="Davis C."/>
            <person name="Delgado O."/>
            <person name="Dinh H.H."/>
            <person name="Draper H."/>
            <person name="Gonzalez-Garay M.L."/>
            <person name="Havlak P."/>
            <person name="Jackson L.R."/>
            <person name="Jacob L.S."/>
            <person name="Kelly S.H."/>
            <person name="Li L."/>
            <person name="Li Z."/>
            <person name="Liu J."/>
            <person name="Liu W."/>
            <person name="Lu J."/>
            <person name="Maheshwari M."/>
            <person name="Nguyen B.-V."/>
            <person name="Okwuonu G.O."/>
            <person name="Pasternak S."/>
            <person name="Perez L.M."/>
            <person name="Plopper F.J.H."/>
            <person name="Santibanez J."/>
            <person name="Shen H."/>
            <person name="Tabor P.E."/>
            <person name="Verduzco D."/>
            <person name="Waldron L."/>
            <person name="Wang Q."/>
            <person name="Williams G.A."/>
            <person name="Zhang J."/>
            <person name="Zhou J."/>
            <person name="Allen C.C."/>
            <person name="Amin A.G."/>
            <person name="Anyalebechi V."/>
            <person name="Bailey M."/>
            <person name="Barbaria J.A."/>
            <person name="Bimage K.E."/>
            <person name="Bryant N.P."/>
            <person name="Burch P.E."/>
            <person name="Burkett C.E."/>
            <person name="Burrell K.L."/>
            <person name="Calderon E."/>
            <person name="Cardenas V."/>
            <person name="Carter K."/>
            <person name="Casias K."/>
            <person name="Cavazos I."/>
            <person name="Cavazos S.R."/>
            <person name="Ceasar H."/>
            <person name="Chacko J."/>
            <person name="Chan S.N."/>
            <person name="Chavez D."/>
            <person name="Christopoulos C."/>
            <person name="Chu J."/>
            <person name="Cockrell R."/>
            <person name="Cox C.D."/>
            <person name="Dang M."/>
            <person name="Dathorne S.R."/>
            <person name="David R."/>
            <person name="Davis C.M."/>
            <person name="Davy-Carroll L."/>
            <person name="Deshazo D.R."/>
            <person name="Donlin J.E."/>
            <person name="D'Souza L."/>
            <person name="Eaves K.A."/>
            <person name="Egan A."/>
            <person name="Emery-Cohen A.J."/>
            <person name="Escotto M."/>
            <person name="Flagg N."/>
            <person name="Forbes L.D."/>
            <person name="Gabisi A.M."/>
            <person name="Garza M."/>
            <person name="Hamilton C."/>
            <person name="Henderson N."/>
            <person name="Hernandez O."/>
            <person name="Hines S."/>
            <person name="Hogues M.E."/>
            <person name="Huang M."/>
            <person name="Idlebird D.G."/>
            <person name="Johnson R."/>
            <person name="Jolivet A."/>
            <person name="Jones S."/>
            <person name="Kagan R."/>
            <person name="King L.M."/>
            <person name="Leal B."/>
            <person name="Lebow H."/>
            <person name="Lee S."/>
            <person name="LeVan J.M."/>
            <person name="Lewis L.C."/>
            <person name="London P."/>
            <person name="Lorensuhewa L.M."/>
            <person name="Loulseged H."/>
            <person name="Lovett D.A."/>
            <person name="Lucier A."/>
            <person name="Lucier R.L."/>
            <person name="Ma J."/>
            <person name="Madu R.C."/>
            <person name="Mapua P."/>
            <person name="Martindale A.D."/>
            <person name="Martinez E."/>
            <person name="Massey E."/>
            <person name="Mawhiney S."/>
            <person name="Meador M.G."/>
            <person name="Mendez S."/>
            <person name="Mercado C."/>
            <person name="Mercado I.C."/>
            <person name="Merritt C.E."/>
            <person name="Miner Z.L."/>
            <person name="Minja E."/>
            <person name="Mitchell T."/>
            <person name="Mohabbat F."/>
            <person name="Mohabbat K."/>
            <person name="Montgomery B."/>
            <person name="Moore N."/>
            <person name="Morris S."/>
            <person name="Munidasa M."/>
            <person name="Ngo R.N."/>
            <person name="Nguyen N.B."/>
            <person name="Nickerson E."/>
            <person name="Nwaokelemeh O.O."/>
            <person name="Nwokenkwo S."/>
            <person name="Obregon M."/>
            <person name="Oguh M."/>
            <person name="Oragunye N."/>
            <person name="Oviedo R.J."/>
            <person name="Parish B.J."/>
            <person name="Parker D.N."/>
            <person name="Parrish J."/>
            <person name="Parks K.L."/>
            <person name="Paul H.A."/>
            <person name="Payton B.A."/>
            <person name="Perez A."/>
            <person name="Perrin W."/>
            <person name="Pickens A."/>
            <person name="Primus E.L."/>
            <person name="Pu L.-L."/>
            <person name="Puazo M."/>
            <person name="Quiles M.M."/>
            <person name="Quiroz J.B."/>
            <person name="Rabata D."/>
            <person name="Reeves K."/>
            <person name="Ruiz S.J."/>
            <person name="Shao H."/>
            <person name="Sisson I."/>
            <person name="Sonaike T."/>
            <person name="Sorelle R.P."/>
            <person name="Sutton A.E."/>
            <person name="Svatek A.F."/>
            <person name="Svetz L.A."/>
            <person name="Tamerisa K.S."/>
            <person name="Taylor T.R."/>
            <person name="Teague B."/>
            <person name="Thomas N."/>
            <person name="Thorn R.D."/>
            <person name="Trejos Z.Y."/>
            <person name="Trevino B.K."/>
            <person name="Ukegbu O.N."/>
            <person name="Urban J.B."/>
            <person name="Vasquez L.I."/>
            <person name="Vera V.A."/>
            <person name="Villasana D.M."/>
            <person name="Wang L."/>
            <person name="Ward-Moore S."/>
            <person name="Warren J.T."/>
            <person name="Wei X."/>
            <person name="White F."/>
            <person name="Williamson A.L."/>
            <person name="Wleczyk R."/>
            <person name="Wooden H.S."/>
            <person name="Wooden S.H."/>
            <person name="Yen J."/>
            <person name="Yoon L."/>
            <person name="Yoon V."/>
            <person name="Zorrilla S.E."/>
            <person name="Nelson D."/>
            <person name="Kucherlapati R."/>
            <person name="Weinstock G."/>
            <person name="Gibbs R.A."/>
        </authorList>
    </citation>
    <scope>NUCLEOTIDE SEQUENCE [LARGE SCALE GENOMIC DNA]</scope>
</reference>
<reference key="3">
    <citation type="journal article" date="2004" name="Genome Res.">
        <title>The status, quality, and expansion of the NIH full-length cDNA project: the Mammalian Gene Collection (MGC).</title>
        <authorList>
            <consortium name="The MGC Project Team"/>
        </authorList>
    </citation>
    <scope>NUCLEOTIDE SEQUENCE [LARGE SCALE MRNA] (ISOFORM 1)</scope>
    <source>
        <tissue>Brain</tissue>
    </source>
</reference>
<accession>Q8NA47</accession>
<accession>B4DY03</accession>
<accession>Q0P603</accession>
<accession>Q6P2E1</accession>
<feature type="chain" id="PRO_0000288874" description="Coiled-coil domain-containing protein 63">
    <location>
        <begin position="1"/>
        <end position="563"/>
    </location>
</feature>
<feature type="region of interest" description="Disordered" evidence="3">
    <location>
        <begin position="1"/>
        <end position="29"/>
    </location>
</feature>
<feature type="coiled-coil region" evidence="2">
    <location>
        <begin position="18"/>
        <end position="201"/>
    </location>
</feature>
<feature type="coiled-coil region" evidence="2">
    <location>
        <begin position="233"/>
        <end position="291"/>
    </location>
</feature>
<feature type="coiled-coil region" evidence="2">
    <location>
        <begin position="341"/>
        <end position="422"/>
    </location>
</feature>
<feature type="compositionally biased region" description="Basic and acidic residues" evidence="3">
    <location>
        <begin position="10"/>
        <end position="29"/>
    </location>
</feature>
<feature type="splice variant" id="VSP_054895" description="In isoform 2." evidence="4">
    <location>
        <begin position="1"/>
        <end position="40"/>
    </location>
</feature>
<feature type="sequence variant" id="VAR_050758" description="In dbSNP:rs12371434.">
    <original>L</original>
    <variation>S</variation>
    <location>
        <position position="212"/>
    </location>
</feature>
<feature type="sequence conflict" description="In Ref. 3; AAH64580." evidence="5" ref="3">
    <original>RQQFRKMVESRKSFKFRNQQKIASQY</original>
    <variation>VGSAVAAAVGQAARAATDKQSGPRHC</variation>
    <location>
        <begin position="35"/>
        <end position="60"/>
    </location>
</feature>
<name>CCD63_HUMAN</name>
<gene>
    <name evidence="6" type="primary">CCDC63</name>
</gene>
<comment type="function">
    <text evidence="1">Plays a role in spermiogenesis. Involved in the elongation of flagella and the formation of sperm heads.</text>
</comment>
<comment type="alternative products">
    <event type="alternative splicing"/>
    <isoform>
        <id>Q8NA47-1</id>
        <name>1</name>
        <sequence type="displayed"/>
    </isoform>
    <isoform>
        <id>Q8NA47-2</id>
        <name>2</name>
        <sequence type="described" ref="VSP_054895"/>
    </isoform>
</comment>
<comment type="sequence caution" evidence="5">
    <conflict type="frameshift">
        <sequence resource="EMBL-CDS" id="AAH44815"/>
    </conflict>
</comment>
<evidence type="ECO:0000250" key="1">
    <source>
        <dbReference type="UniProtKB" id="Q8CDV6"/>
    </source>
</evidence>
<evidence type="ECO:0000255" key="2"/>
<evidence type="ECO:0000256" key="3">
    <source>
        <dbReference type="SAM" id="MobiDB-lite"/>
    </source>
</evidence>
<evidence type="ECO:0000303" key="4">
    <source>
    </source>
</evidence>
<evidence type="ECO:0000305" key="5"/>
<evidence type="ECO:0000312" key="6">
    <source>
        <dbReference type="HGNC" id="HGNC:26669"/>
    </source>
</evidence>
<keyword id="KW-0025">Alternative splicing</keyword>
<keyword id="KW-0175">Coiled coil</keyword>
<keyword id="KW-0221">Differentiation</keyword>
<keyword id="KW-1267">Proteomics identification</keyword>
<keyword id="KW-1185">Reference proteome</keyword>
<keyword id="KW-0744">Spermatogenesis</keyword>
<dbReference type="EMBL" id="AK093162">
    <property type="protein sequence ID" value="BAC04081.1"/>
    <property type="molecule type" value="mRNA"/>
</dbReference>
<dbReference type="EMBL" id="AK302207">
    <property type="protein sequence ID" value="BAG63565.1"/>
    <property type="molecule type" value="mRNA"/>
</dbReference>
<dbReference type="EMBL" id="AC002351">
    <property type="status" value="NOT_ANNOTATED_CDS"/>
    <property type="molecule type" value="Genomic_DNA"/>
</dbReference>
<dbReference type="EMBL" id="AC002375">
    <property type="status" value="NOT_ANNOTATED_CDS"/>
    <property type="molecule type" value="Genomic_DNA"/>
</dbReference>
<dbReference type="EMBL" id="BC044815">
    <property type="protein sequence ID" value="AAH44815.1"/>
    <property type="status" value="ALT_FRAME"/>
    <property type="molecule type" value="mRNA"/>
</dbReference>
<dbReference type="EMBL" id="BC064580">
    <property type="protein sequence ID" value="AAH64580.1"/>
    <property type="molecule type" value="mRNA"/>
</dbReference>
<dbReference type="EMBL" id="BC073147">
    <property type="protein sequence ID" value="AAH73147.1"/>
    <property type="molecule type" value="mRNA"/>
</dbReference>
<dbReference type="CCDS" id="CCDS66470.1">
    <molecule id="Q8NA47-2"/>
</dbReference>
<dbReference type="CCDS" id="CCDS9151.1">
    <molecule id="Q8NA47-1"/>
</dbReference>
<dbReference type="RefSeq" id="NP_001273172.1">
    <molecule id="Q8NA47-2"/>
    <property type="nucleotide sequence ID" value="NM_001286243.2"/>
</dbReference>
<dbReference type="RefSeq" id="NP_001273173.1">
    <property type="nucleotide sequence ID" value="NM_001286244.1"/>
</dbReference>
<dbReference type="RefSeq" id="NP_689804.1">
    <molecule id="Q8NA47-1"/>
    <property type="nucleotide sequence ID" value="NM_152591.3"/>
</dbReference>
<dbReference type="RefSeq" id="XP_006719325.1">
    <property type="nucleotide sequence ID" value="XM_006719262.1"/>
</dbReference>
<dbReference type="RefSeq" id="XP_011536301.1">
    <molecule id="Q8NA47-1"/>
    <property type="nucleotide sequence ID" value="XM_011537999.2"/>
</dbReference>
<dbReference type="RefSeq" id="XP_011536303.1">
    <molecule id="Q8NA47-1"/>
    <property type="nucleotide sequence ID" value="XM_011538001.3"/>
</dbReference>
<dbReference type="RefSeq" id="XP_047284398.1">
    <molecule id="Q8NA47-1"/>
    <property type="nucleotide sequence ID" value="XM_047428442.1"/>
</dbReference>
<dbReference type="RefSeq" id="XP_047284399.1">
    <molecule id="Q8NA47-1"/>
    <property type="nucleotide sequence ID" value="XM_047428443.1"/>
</dbReference>
<dbReference type="RefSeq" id="XP_054227270.1">
    <molecule id="Q8NA47-1"/>
    <property type="nucleotide sequence ID" value="XM_054371295.1"/>
</dbReference>
<dbReference type="RefSeq" id="XP_054227271.1">
    <molecule id="Q8NA47-1"/>
    <property type="nucleotide sequence ID" value="XM_054371296.1"/>
</dbReference>
<dbReference type="RefSeq" id="XP_054227272.1">
    <molecule id="Q8NA47-1"/>
    <property type="nucleotide sequence ID" value="XM_054371297.1"/>
</dbReference>
<dbReference type="RefSeq" id="XP_054227273.1">
    <molecule id="Q8NA47-1"/>
    <property type="nucleotide sequence ID" value="XM_054371298.1"/>
</dbReference>
<dbReference type="SMR" id="Q8NA47"/>
<dbReference type="BioGRID" id="127765">
    <property type="interactions" value="3"/>
</dbReference>
<dbReference type="FunCoup" id="Q8NA47">
    <property type="interactions" value="55"/>
</dbReference>
<dbReference type="IntAct" id="Q8NA47">
    <property type="interactions" value="3"/>
</dbReference>
<dbReference type="STRING" id="9606.ENSP00000312399"/>
<dbReference type="iPTMnet" id="Q8NA47"/>
<dbReference type="PhosphoSitePlus" id="Q8NA47"/>
<dbReference type="BioMuta" id="CCDC63"/>
<dbReference type="DMDM" id="74729832"/>
<dbReference type="MassIVE" id="Q8NA47"/>
<dbReference type="PaxDb" id="9606-ENSP00000312399"/>
<dbReference type="PeptideAtlas" id="Q8NA47"/>
<dbReference type="ProteomicsDB" id="5484"/>
<dbReference type="ProteomicsDB" id="72636">
    <molecule id="Q8NA47-1"/>
</dbReference>
<dbReference type="Antibodypedia" id="45271">
    <property type="antibodies" value="124 antibodies from 18 providers"/>
</dbReference>
<dbReference type="DNASU" id="160762"/>
<dbReference type="Ensembl" id="ENST00000308208.10">
    <molecule id="Q8NA47-1"/>
    <property type="protein sequence ID" value="ENSP00000312399.5"/>
    <property type="gene ID" value="ENSG00000173093.13"/>
</dbReference>
<dbReference type="Ensembl" id="ENST00000545036.5">
    <molecule id="Q8NA47-2"/>
    <property type="protein sequence ID" value="ENSP00000445881.1"/>
    <property type="gene ID" value="ENSG00000173093.13"/>
</dbReference>
<dbReference type="GeneID" id="160762"/>
<dbReference type="KEGG" id="hsa:160762"/>
<dbReference type="MANE-Select" id="ENST00000308208.10">
    <property type="protein sequence ID" value="ENSP00000312399.5"/>
    <property type="RefSeq nucleotide sequence ID" value="NM_152591.3"/>
    <property type="RefSeq protein sequence ID" value="NP_689804.1"/>
</dbReference>
<dbReference type="UCSC" id="uc001trv.2">
    <molecule id="Q8NA47-1"/>
    <property type="organism name" value="human"/>
</dbReference>
<dbReference type="AGR" id="HGNC:26669"/>
<dbReference type="CTD" id="160762"/>
<dbReference type="DisGeNET" id="160762"/>
<dbReference type="GeneCards" id="CCDC63"/>
<dbReference type="HGNC" id="HGNC:26669">
    <property type="gene designation" value="CCDC63"/>
</dbReference>
<dbReference type="HPA" id="ENSG00000173093">
    <property type="expression patterns" value="Tissue enriched (testis)"/>
</dbReference>
<dbReference type="MIM" id="617969">
    <property type="type" value="gene"/>
</dbReference>
<dbReference type="neXtProt" id="NX_Q8NA47"/>
<dbReference type="OpenTargets" id="ENSG00000173093"/>
<dbReference type="PharmGKB" id="PA143485415"/>
<dbReference type="VEuPathDB" id="HostDB:ENSG00000173093"/>
<dbReference type="eggNOG" id="ENOG502QSIU">
    <property type="taxonomic scope" value="Eukaryota"/>
</dbReference>
<dbReference type="GeneTree" id="ENSGT00940000153116"/>
<dbReference type="InParanoid" id="Q8NA47"/>
<dbReference type="OMA" id="MMHKKTQ"/>
<dbReference type="OrthoDB" id="6766775at2759"/>
<dbReference type="PAN-GO" id="Q8NA47">
    <property type="GO annotations" value="3 GO annotations based on evolutionary models"/>
</dbReference>
<dbReference type="PhylomeDB" id="Q8NA47"/>
<dbReference type="TreeFam" id="TF323742"/>
<dbReference type="PathwayCommons" id="Q8NA47"/>
<dbReference type="SignaLink" id="Q8NA47"/>
<dbReference type="BioGRID-ORCS" id="160762">
    <property type="hits" value="7 hits in 1140 CRISPR screens"/>
</dbReference>
<dbReference type="ChiTaRS" id="CCDC63">
    <property type="organism name" value="human"/>
</dbReference>
<dbReference type="GenomeRNAi" id="160762"/>
<dbReference type="Pharos" id="Q8NA47">
    <property type="development level" value="Tbio"/>
</dbReference>
<dbReference type="PRO" id="PR:Q8NA47"/>
<dbReference type="Proteomes" id="UP000005640">
    <property type="component" value="Chromosome 12"/>
</dbReference>
<dbReference type="RNAct" id="Q8NA47">
    <property type="molecule type" value="protein"/>
</dbReference>
<dbReference type="Bgee" id="ENSG00000173093">
    <property type="expression patterns" value="Expressed in left testis and 33 other cell types or tissues"/>
</dbReference>
<dbReference type="ExpressionAtlas" id="Q8NA47">
    <property type="expression patterns" value="baseline and differential"/>
</dbReference>
<dbReference type="GO" id="GO:0005930">
    <property type="term" value="C:axoneme"/>
    <property type="evidence" value="ECO:0000318"/>
    <property type="project" value="GO_Central"/>
</dbReference>
<dbReference type="GO" id="GO:0003341">
    <property type="term" value="P:cilium movement"/>
    <property type="evidence" value="ECO:0000318"/>
    <property type="project" value="GO_Central"/>
</dbReference>
<dbReference type="GO" id="GO:0036158">
    <property type="term" value="P:outer dynein arm assembly"/>
    <property type="evidence" value="ECO:0000318"/>
    <property type="project" value="GO_Central"/>
</dbReference>
<dbReference type="GO" id="GO:0007286">
    <property type="term" value="P:spermatid development"/>
    <property type="evidence" value="ECO:0000250"/>
    <property type="project" value="UniProtKB"/>
</dbReference>
<dbReference type="InterPro" id="IPR051876">
    <property type="entry name" value="ODA-DC/CCD"/>
</dbReference>
<dbReference type="InterPro" id="IPR049258">
    <property type="entry name" value="ODAD1_CC"/>
</dbReference>
<dbReference type="PANTHER" id="PTHR21694">
    <property type="entry name" value="COILED-COIL DOMAIN-CONTAINING PROTEIN 63"/>
    <property type="match status" value="1"/>
</dbReference>
<dbReference type="PANTHER" id="PTHR21694:SF18">
    <property type="entry name" value="COILED-COIL DOMAIN-CONTAINING PROTEIN 63"/>
    <property type="match status" value="1"/>
</dbReference>
<dbReference type="Pfam" id="PF21773">
    <property type="entry name" value="ODAD1_CC"/>
    <property type="match status" value="1"/>
</dbReference>
<sequence length="563" mass="66250">MSVLKKNRRKDSDTPQEPSEKAKEQQAEAELRKLRQQFRKMVESRKSFKFRNQQKIASQYKEIKTLKTEQDEITLLLSLMKSSRNMNRSEKNYMELRLLLQTKEDYEALIKSLKVLLAELDEKILQMEKKIANQKQIFAKMQEANNPRKLQKQIHILETRLNLVTVHFDKMLTTNAKLRKEIEDLRFEKAAYDNVYQQLQHCLLMEKKTMNLAIEQSSQAYEQRVEAMARMAAMKDRQKKDTSQYNLEIRELERLYAHESKLKSFLLVKLNDRNEFEEQAKREEALKAKKHVKKNRGESFESYEVAHLRLLKLAESGNLNQLIEDFLAKEEKNFARFTYVTELNNDMEMMHKRTQRIQDEIILLRSQQKLSHDDNHSVLRQLEDKLRKTTEEADMYESKYGEVSKTLDLLKNSVEKLFKKINCDATKILVQLGETGKVTDINLPQYFAIIEKKTNDLLLLETYRRILEVEGAEAEIPPPFINPFWGGSALLKPPEPIKVIPPVLGADPFSDRLDDVEQPLDHSSLRQLVLDNYILKENRSKEVRGDSLPEKVDDFRSRKKVTM</sequence>
<proteinExistence type="evidence at protein level"/>
<protein>
    <recommendedName>
        <fullName evidence="6">Coiled-coil domain-containing protein 63</fullName>
    </recommendedName>
</protein>